<feature type="chain" id="PRO_0000450416" description="Cytochrome P450 monooxygenase acuD">
    <location>
        <begin position="1"/>
        <end position="529"/>
    </location>
</feature>
<feature type="transmembrane region" description="Helical" evidence="5">
    <location>
        <begin position="8"/>
        <end position="28"/>
    </location>
</feature>
<feature type="binding site" description="axial binding residue" evidence="4">
    <location>
        <position position="449"/>
    </location>
    <ligand>
        <name>heme</name>
        <dbReference type="ChEBI" id="CHEBI:30413"/>
    </ligand>
    <ligandPart>
        <name>Fe</name>
        <dbReference type="ChEBI" id="CHEBI:18248"/>
    </ligandPart>
</feature>
<feature type="glycosylation site" description="N-linked (GlcNAc...) asparagine" evidence="6">
    <location>
        <position position="81"/>
    </location>
</feature>
<keyword id="KW-0256">Endoplasmic reticulum</keyword>
<keyword id="KW-0325">Glycoprotein</keyword>
<keyword id="KW-0349">Heme</keyword>
<keyword id="KW-0408">Iron</keyword>
<keyword id="KW-0472">Membrane</keyword>
<keyword id="KW-0479">Metal-binding</keyword>
<keyword id="KW-0503">Monooxygenase</keyword>
<keyword id="KW-0560">Oxidoreductase</keyword>
<keyword id="KW-1185">Reference proteome</keyword>
<keyword id="KW-0812">Transmembrane</keyword>
<keyword id="KW-1133">Transmembrane helix</keyword>
<gene>
    <name evidence="8" type="primary">acuD</name>
    <name type="ORF">ASPACDRAFT_32595</name>
</gene>
<name>ACUD_ASPA1</name>
<protein>
    <recommendedName>
        <fullName evidence="8">Cytochrome P450 monooxygenase acuD</fullName>
        <ecNumber evidence="10">1.-.-.-</ecNumber>
    </recommendedName>
    <alternativeName>
        <fullName evidence="8">Aculin biosynthesis cluster protein D</fullName>
    </alternativeName>
    <alternativeName>
        <fullName evidence="8">m-hydroxybenzyl alcohol hydroxylase acuD</fullName>
    </alternativeName>
</protein>
<dbReference type="EC" id="1.-.-.-" evidence="10"/>
<dbReference type="EMBL" id="KV878982">
    <property type="protein sequence ID" value="OJJ97580.1"/>
    <property type="molecule type" value="Genomic_DNA"/>
</dbReference>
<dbReference type="RefSeq" id="XP_020053920.1">
    <property type="nucleotide sequence ID" value="XM_020199890.1"/>
</dbReference>
<dbReference type="SMR" id="A0A1L9WN72"/>
<dbReference type="STRING" id="690307.A0A1L9WN72"/>
<dbReference type="GlyCosmos" id="A0A1L9WN72">
    <property type="glycosylation" value="1 site, No reported glycans"/>
</dbReference>
<dbReference type="GeneID" id="30973704"/>
<dbReference type="VEuPathDB" id="FungiDB:ASPACDRAFT_32595"/>
<dbReference type="OMA" id="ESHRWRP"/>
<dbReference type="OrthoDB" id="1103324at2759"/>
<dbReference type="Proteomes" id="UP000184546">
    <property type="component" value="Unassembled WGS sequence"/>
</dbReference>
<dbReference type="GO" id="GO:0005789">
    <property type="term" value="C:endoplasmic reticulum membrane"/>
    <property type="evidence" value="ECO:0007669"/>
    <property type="project" value="UniProtKB-SubCell"/>
</dbReference>
<dbReference type="GO" id="GO:0020037">
    <property type="term" value="F:heme binding"/>
    <property type="evidence" value="ECO:0007669"/>
    <property type="project" value="InterPro"/>
</dbReference>
<dbReference type="GO" id="GO:0005506">
    <property type="term" value="F:iron ion binding"/>
    <property type="evidence" value="ECO:0007669"/>
    <property type="project" value="InterPro"/>
</dbReference>
<dbReference type="GO" id="GO:0004497">
    <property type="term" value="F:monooxygenase activity"/>
    <property type="evidence" value="ECO:0007669"/>
    <property type="project" value="UniProtKB-KW"/>
</dbReference>
<dbReference type="GO" id="GO:0016705">
    <property type="term" value="F:oxidoreductase activity, acting on paired donors, with incorporation or reduction of molecular oxygen"/>
    <property type="evidence" value="ECO:0007669"/>
    <property type="project" value="InterPro"/>
</dbReference>
<dbReference type="CDD" id="cd11065">
    <property type="entry name" value="CYP64-like"/>
    <property type="match status" value="1"/>
</dbReference>
<dbReference type="Gene3D" id="1.10.630.10">
    <property type="entry name" value="Cytochrome P450"/>
    <property type="match status" value="1"/>
</dbReference>
<dbReference type="InterPro" id="IPR001128">
    <property type="entry name" value="Cyt_P450"/>
</dbReference>
<dbReference type="InterPro" id="IPR002401">
    <property type="entry name" value="Cyt_P450_E_grp-I"/>
</dbReference>
<dbReference type="InterPro" id="IPR036396">
    <property type="entry name" value="Cyt_P450_sf"/>
</dbReference>
<dbReference type="InterPro" id="IPR050364">
    <property type="entry name" value="Cytochrome_P450_fung"/>
</dbReference>
<dbReference type="PANTHER" id="PTHR46300:SF2">
    <property type="entry name" value="CYTOCHROME P450 MONOOXYGENASE ALNH-RELATED"/>
    <property type="match status" value="1"/>
</dbReference>
<dbReference type="PANTHER" id="PTHR46300">
    <property type="entry name" value="P450, PUTATIVE (EUROFUNG)-RELATED-RELATED"/>
    <property type="match status" value="1"/>
</dbReference>
<dbReference type="Pfam" id="PF00067">
    <property type="entry name" value="p450"/>
    <property type="match status" value="1"/>
</dbReference>
<dbReference type="PRINTS" id="PR00463">
    <property type="entry name" value="EP450I"/>
</dbReference>
<dbReference type="SUPFAM" id="SSF48264">
    <property type="entry name" value="Cytochrome P450"/>
    <property type="match status" value="1"/>
</dbReference>
<reference key="1">
    <citation type="journal article" date="2017" name="Genome Biol.">
        <title>Comparative genomics reveals high biological diversity and specific adaptations in the industrially and medically important fungal genus Aspergillus.</title>
        <authorList>
            <person name="de Vries R.P."/>
            <person name="Riley R."/>
            <person name="Wiebenga A."/>
            <person name="Aguilar-Osorio G."/>
            <person name="Amillis S."/>
            <person name="Uchima C.A."/>
            <person name="Anderluh G."/>
            <person name="Asadollahi M."/>
            <person name="Askin M."/>
            <person name="Barry K."/>
            <person name="Battaglia E."/>
            <person name="Bayram O."/>
            <person name="Benocci T."/>
            <person name="Braus-Stromeyer S.A."/>
            <person name="Caldana C."/>
            <person name="Canovas D."/>
            <person name="Cerqueira G.C."/>
            <person name="Chen F."/>
            <person name="Chen W."/>
            <person name="Choi C."/>
            <person name="Clum A."/>
            <person name="Dos Santos R.A."/>
            <person name="Damasio A.R."/>
            <person name="Diallinas G."/>
            <person name="Emri T."/>
            <person name="Fekete E."/>
            <person name="Flipphi M."/>
            <person name="Freyberg S."/>
            <person name="Gallo A."/>
            <person name="Gournas C."/>
            <person name="Habgood R."/>
            <person name="Hainaut M."/>
            <person name="Harispe M.L."/>
            <person name="Henrissat B."/>
            <person name="Hilden K.S."/>
            <person name="Hope R."/>
            <person name="Hossain A."/>
            <person name="Karabika E."/>
            <person name="Karaffa L."/>
            <person name="Karanyi Z."/>
            <person name="Krasevec N."/>
            <person name="Kuo A."/>
            <person name="Kusch H."/>
            <person name="LaButti K."/>
            <person name="Lagendijk E.L."/>
            <person name="Lapidus A."/>
            <person name="Levasseur A."/>
            <person name="Lindquist E."/>
            <person name="Lipzen A."/>
            <person name="Logrieco A.F."/>
            <person name="MacCabe A."/>
            <person name="Maekelae M.R."/>
            <person name="Malavazi I."/>
            <person name="Melin P."/>
            <person name="Meyer V."/>
            <person name="Mielnichuk N."/>
            <person name="Miskei M."/>
            <person name="Molnar A.P."/>
            <person name="Mule G."/>
            <person name="Ngan C.Y."/>
            <person name="Orejas M."/>
            <person name="Orosz E."/>
            <person name="Ouedraogo J.P."/>
            <person name="Overkamp K.M."/>
            <person name="Park H.-S."/>
            <person name="Perrone G."/>
            <person name="Piumi F."/>
            <person name="Punt P.J."/>
            <person name="Ram A.F."/>
            <person name="Ramon A."/>
            <person name="Rauscher S."/>
            <person name="Record E."/>
            <person name="Riano-Pachon D.M."/>
            <person name="Robert V."/>
            <person name="Roehrig J."/>
            <person name="Ruller R."/>
            <person name="Salamov A."/>
            <person name="Salih N.S."/>
            <person name="Samson R.A."/>
            <person name="Sandor E."/>
            <person name="Sanguinetti M."/>
            <person name="Schuetze T."/>
            <person name="Sepcic K."/>
            <person name="Shelest E."/>
            <person name="Sherlock G."/>
            <person name="Sophianopoulou V."/>
            <person name="Squina F.M."/>
            <person name="Sun H."/>
            <person name="Susca A."/>
            <person name="Todd R.B."/>
            <person name="Tsang A."/>
            <person name="Unkles S.E."/>
            <person name="van de Wiele N."/>
            <person name="van Rossen-Uffink D."/>
            <person name="Oliveira J.V."/>
            <person name="Vesth T.C."/>
            <person name="Visser J."/>
            <person name="Yu J.-H."/>
            <person name="Zhou M."/>
            <person name="Andersen M.R."/>
            <person name="Archer D.B."/>
            <person name="Baker S.E."/>
            <person name="Benoit I."/>
            <person name="Brakhage A.A."/>
            <person name="Braus G.H."/>
            <person name="Fischer R."/>
            <person name="Frisvad J.C."/>
            <person name="Goldman G.H."/>
            <person name="Houbraken J."/>
            <person name="Oakley B."/>
            <person name="Pocsi I."/>
            <person name="Scazzocchio C."/>
            <person name="Seiboth B."/>
            <person name="vanKuyk P.A."/>
            <person name="Wortman J."/>
            <person name="Dyer P.S."/>
            <person name="Grigoriev I.V."/>
        </authorList>
    </citation>
    <scope>NUCLEOTIDE SEQUENCE [LARGE SCALE GENOMIC DNA]</scope>
    <source>
        <strain>ATCC 16872 / CBS 172.66 / WB 5094</strain>
    </source>
</reference>
<reference key="2">
    <citation type="journal article" date="2015" name="ChemBioChem">
        <title>Investigation of a 6-MSA Synthase Gene Cluster in Aspergillus aculeatus Reveals 6-MSA-derived Aculinic Acid, Aculins A-B and Epi-Aculin A.</title>
        <authorList>
            <person name="Petersen L.M."/>
            <person name="Holm D.K."/>
            <person name="Gotfredsen C.H."/>
            <person name="Mortensen U.H."/>
            <person name="Larsen T.O."/>
        </authorList>
    </citation>
    <scope>FUNCTION</scope>
    <scope>PATHWAY</scope>
</reference>
<sequence length="529" mass="60257">MSLIVSPFAVIAASAAAVAGVLFLIYAALKSGHRDASLPPGPPTVPLFGNELQIPKADAHFQFMKWADEYGGTFSLKRFKNTTIVISDRKLIKELVDKKSNVYSHRPASLVSHLITHSDHLLVMQYGDTWRMLRKTVHQYFMEPNCEKEHWKVQEAEAKQMLYDFLTAPQDHMLHPKRYSNSITNSLVFGIRSKTVHDEYMERLFYLMEKWSLVQELGATPPVDDFWLLRVLPQWMTGHWRHRALEVENLMQSLYTTVLDQVRDRRARGINRDSFMDRVLDRLDKVPLTESQLRFLGGVLMEGGSDTSSSLILTIIQAMTKFPAVQARAHAEIDRVVGADRSPAWSDAAQLPYINCIIKEAHRWRPVSPLGVPHAVAQDDEINGMVLPKGATVVLNVWAMHHDPRRWPEPERFEPARFEEFPALAPTYAASGEWDKRDHYGYGAGRRICPGIHLAERNLIIGVAKLLWAFEFTQPVGSYSDIDPESGASQGFLHCPKEYGCGVRLRAPEKRDTIVREFQEAQEVFARFD</sequence>
<accession>A0A1L9WN72</accession>
<organism>
    <name type="scientific">Aspergillus aculeatus (strain ATCC 16872 / CBS 172.66 / WB 5094)</name>
    <dbReference type="NCBI Taxonomy" id="690307"/>
    <lineage>
        <taxon>Eukaryota</taxon>
        <taxon>Fungi</taxon>
        <taxon>Dikarya</taxon>
        <taxon>Ascomycota</taxon>
        <taxon>Pezizomycotina</taxon>
        <taxon>Eurotiomycetes</taxon>
        <taxon>Eurotiomycetidae</taxon>
        <taxon>Eurotiales</taxon>
        <taxon>Aspergillaceae</taxon>
        <taxon>Aspergillus</taxon>
        <taxon>Aspergillus subgen. Circumdati</taxon>
    </lineage>
</organism>
<proteinExistence type="inferred from homology"/>
<comment type="function">
    <text evidence="2 7 10">Cytochrome P450 monooxygenase; part of the gene cluster that mediates the biosynthesis of aculins (PubMed:26374386). The pathway begins with the synthesis of 6-methylsalicylic acid by the polyketide synthase (PKS) acuA via condensation of acetate and malonate units (PubMed:26374386). The 6-methylsalicylic acid decarboxylase acuB then catalyzes the decarboxylation of 6-methylsalicylic acid to yield m-cresol (also known as 3-methylphenol) (Probable). These first reactions occur in the cytosol (By similarity). The intermediate m-cresol is then transported into the endoplasmic reticulum where the cytochrome P450 monooxygenase acuC converts it to m-hydroxybenzyl alcohol, which is further converted to gentisyl alcohol by the cytochrome P450 monooxygenase acuD (Probable). Gentisyl alcohol is further oxidized by the oxidoreductase acuE that probably catalyzes hydroxylation of the aromatic ring (Probable). The aromatic system might then be opened by oxidation through a Baeyer-Villiger type of oxidation, which could be catalyzed by acuF, with the carboxylic acid at C-1 subsequently reduced to an aldehyde by acuG (Probable). Subsequently, a hemiacetal is formed, before the dehydrogenase acuH would reduce the double bond between C-4 and C-6 (Probable). Finally, keto-enol tautomerism results in formation of aculinic acid, which exists as two diastereomers (both R/S configurations at C-1) by non-enzymatic hemiacetal formation (Probable). The carboxypeptidase acuI could be involved in the linking of aculinic acid to an aculene A moiety produced by the aculene biosynthesis cluster and which leads to the production of aculin A (Probable). AcuI may also be involved in the attachment of proline to aculinic acid to form epi-aculins A and B (Probable).</text>
</comment>
<comment type="catalytic activity">
    <reaction evidence="10">
        <text>3-hydroxybenzyl alcohol + reduced [NADPH--hemoprotein reductase] + O2 = gentisyl alcohol + oxidized [NADPH--hemoprotein reductase] + H2O + H(+)</text>
        <dbReference type="Rhea" id="RHEA:62212"/>
        <dbReference type="Rhea" id="RHEA-COMP:11964"/>
        <dbReference type="Rhea" id="RHEA-COMP:11965"/>
        <dbReference type="ChEBI" id="CHEBI:5325"/>
        <dbReference type="ChEBI" id="CHEBI:15377"/>
        <dbReference type="ChEBI" id="CHEBI:15378"/>
        <dbReference type="ChEBI" id="CHEBI:15379"/>
        <dbReference type="ChEBI" id="CHEBI:17069"/>
        <dbReference type="ChEBI" id="CHEBI:57618"/>
        <dbReference type="ChEBI" id="CHEBI:58210"/>
    </reaction>
    <physiologicalReaction direction="left-to-right" evidence="10">
        <dbReference type="Rhea" id="RHEA:62213"/>
    </physiologicalReaction>
</comment>
<comment type="cofactor">
    <cofactor evidence="1">
        <name>heme</name>
        <dbReference type="ChEBI" id="CHEBI:30413"/>
    </cofactor>
</comment>
<comment type="pathway">
    <text evidence="10">Secondary metabolite biosynthesis.</text>
</comment>
<comment type="subcellular location">
    <subcellularLocation>
        <location evidence="3">Endoplasmic reticulum membrane</location>
        <topology evidence="5">Single-pass membrane protein</topology>
    </subcellularLocation>
</comment>
<comment type="similarity">
    <text evidence="9">Belongs to the cytochrome P450 family.</text>
</comment>
<evidence type="ECO:0000250" key="1">
    <source>
        <dbReference type="UniProtKB" id="A0A075TMP8"/>
    </source>
</evidence>
<evidence type="ECO:0000250" key="2">
    <source>
        <dbReference type="UniProtKB" id="A0A075TRC0"/>
    </source>
</evidence>
<evidence type="ECO:0000250" key="3">
    <source>
        <dbReference type="UniProtKB" id="A0A075TRL5"/>
    </source>
</evidence>
<evidence type="ECO:0000250" key="4">
    <source>
        <dbReference type="UniProtKB" id="P04798"/>
    </source>
</evidence>
<evidence type="ECO:0000255" key="5"/>
<evidence type="ECO:0000255" key="6">
    <source>
        <dbReference type="PROSITE-ProRule" id="PRU00498"/>
    </source>
</evidence>
<evidence type="ECO:0000269" key="7">
    <source>
    </source>
</evidence>
<evidence type="ECO:0000303" key="8">
    <source>
    </source>
</evidence>
<evidence type="ECO:0000305" key="9"/>
<evidence type="ECO:0000305" key="10">
    <source>
    </source>
</evidence>